<proteinExistence type="predicted"/>
<evidence type="ECO:0000255" key="1"/>
<evidence type="ECO:0000305" key="2"/>
<sequence>MLTPAVFPAVLYLLALVVWVEMFCLVAVAVVEREIAWALLLRMLVVGLMVEVGAAAAWTFVRCLAYQRSFPVLTAFP</sequence>
<feature type="chain" id="PRO_0000418300" description="Protein UL148C">
    <location>
        <begin position="1"/>
        <end position="77"/>
    </location>
</feature>
<feature type="transmembrane region" description="Helical" evidence="1">
    <location>
        <begin position="10"/>
        <end position="30"/>
    </location>
</feature>
<feature type="transmembrane region" description="Helical" evidence="1">
    <location>
        <begin position="35"/>
        <end position="55"/>
    </location>
</feature>
<organismHost>
    <name type="scientific">Homo sapiens</name>
    <name type="common">Human</name>
    <dbReference type="NCBI Taxonomy" id="9606"/>
</organismHost>
<reference key="1">
    <citation type="journal article" date="2004" name="J. Gen. Virol.">
        <title>Genetic content of wild-type human cytomegalovirus.</title>
        <authorList>
            <person name="Dolan A."/>
            <person name="Cunningham C."/>
            <person name="Hector R.D."/>
            <person name="Hassan-Walker A.F."/>
            <person name="Lee L."/>
            <person name="Addison C."/>
            <person name="Dargan D.J."/>
            <person name="McGeoch D.J."/>
            <person name="Gatherer D."/>
            <person name="Emery V.C."/>
            <person name="Griffiths P.D."/>
            <person name="Sinzger C."/>
            <person name="McSharry B.P."/>
            <person name="Wilkinson G.W.G."/>
            <person name="Davison A.J."/>
        </authorList>
    </citation>
    <scope>NUCLEOTIDE SEQUENCE [LARGE SCALE GENOMIC DNA]</scope>
</reference>
<accession>F5HDE7</accession>
<comment type="subcellular location">
    <subcellularLocation>
        <location evidence="2">Host membrane</location>
        <topology evidence="2">Multi-pass membrane protein</topology>
    </subcellularLocation>
</comment>
<keyword id="KW-1043">Host membrane</keyword>
<keyword id="KW-0472">Membrane</keyword>
<keyword id="KW-1185">Reference proteome</keyword>
<keyword id="KW-0812">Transmembrane</keyword>
<keyword id="KW-1133">Transmembrane helix</keyword>
<organism>
    <name type="scientific">Human cytomegalovirus (strain Merlin)</name>
    <name type="common">HHV-5</name>
    <name type="synonym">Human herpesvirus 5</name>
    <dbReference type="NCBI Taxonomy" id="295027"/>
    <lineage>
        <taxon>Viruses</taxon>
        <taxon>Duplodnaviria</taxon>
        <taxon>Heunggongvirae</taxon>
        <taxon>Peploviricota</taxon>
        <taxon>Herviviricetes</taxon>
        <taxon>Herpesvirales</taxon>
        <taxon>Orthoherpesviridae</taxon>
        <taxon>Betaherpesvirinae</taxon>
        <taxon>Cytomegalovirus</taxon>
        <taxon>Cytomegalovirus humanbeta5</taxon>
        <taxon>Human cytomegalovirus</taxon>
    </lineage>
</organism>
<protein>
    <recommendedName>
        <fullName>Protein UL148C</fullName>
    </recommendedName>
</protein>
<name>U148C_HCMVM</name>
<dbReference type="EMBL" id="AY446894">
    <property type="protein sequence ID" value="AAR31688.1"/>
    <property type="molecule type" value="Genomic_DNA"/>
</dbReference>
<dbReference type="RefSeq" id="YP_081584.1">
    <property type="nucleotide sequence ID" value="NC_006273.2"/>
</dbReference>
<dbReference type="SMR" id="F5HDE7"/>
<dbReference type="DNASU" id="3077427"/>
<dbReference type="GeneID" id="3077427"/>
<dbReference type="KEGG" id="vg:3077427"/>
<dbReference type="Proteomes" id="UP000000938">
    <property type="component" value="Segment"/>
</dbReference>
<dbReference type="GO" id="GO:0033644">
    <property type="term" value="C:host cell membrane"/>
    <property type="evidence" value="ECO:0007669"/>
    <property type="project" value="UniProtKB-SubCell"/>
</dbReference>
<dbReference type="GO" id="GO:0016020">
    <property type="term" value="C:membrane"/>
    <property type="evidence" value="ECO:0007669"/>
    <property type="project" value="UniProtKB-KW"/>
</dbReference>
<gene>
    <name type="primary">UL148C</name>
</gene>